<protein>
    <recommendedName>
        <fullName evidence="1">Transcription antitermination protein NusB</fullName>
    </recommendedName>
    <alternativeName>
        <fullName evidence="1">Antitermination factor NusB</fullName>
    </alternativeName>
</protein>
<accession>Q731B1</accession>
<comment type="function">
    <text evidence="1">Involved in transcription antitermination. Required for transcription of ribosomal RNA (rRNA) genes. Binds specifically to the boxA antiterminator sequence of the ribosomal RNA (rrn) operons.</text>
</comment>
<comment type="similarity">
    <text evidence="1">Belongs to the NusB family.</text>
</comment>
<name>NUSB_BACC1</name>
<proteinExistence type="inferred from homology"/>
<sequence length="130" mass="15146">MKRRTARERAMQALYQMDITGELEPKIAVENTLDEGEETNEFLESLVVGFVENKEVIDEAIRQNLKKWKLERISIVDRSILRVAVYEMKYMEEIPHNVTINEAIEIAKTFGDEESRRFINGVLSNIKDTL</sequence>
<feature type="chain" id="PRO_0000265481" description="Transcription antitermination protein NusB">
    <location>
        <begin position="1"/>
        <end position="130"/>
    </location>
</feature>
<gene>
    <name evidence="1" type="primary">nusB</name>
    <name type="ordered locus">BCE_4255</name>
</gene>
<evidence type="ECO:0000255" key="1">
    <source>
        <dbReference type="HAMAP-Rule" id="MF_00073"/>
    </source>
</evidence>
<reference key="1">
    <citation type="journal article" date="2004" name="Nucleic Acids Res.">
        <title>The genome sequence of Bacillus cereus ATCC 10987 reveals metabolic adaptations and a large plasmid related to Bacillus anthracis pXO1.</title>
        <authorList>
            <person name="Rasko D.A."/>
            <person name="Ravel J."/>
            <person name="Oekstad O.A."/>
            <person name="Helgason E."/>
            <person name="Cer R.Z."/>
            <person name="Jiang L."/>
            <person name="Shores K.A."/>
            <person name="Fouts D.E."/>
            <person name="Tourasse N.J."/>
            <person name="Angiuoli S.V."/>
            <person name="Kolonay J.F."/>
            <person name="Nelson W.C."/>
            <person name="Kolstoe A.-B."/>
            <person name="Fraser C.M."/>
            <person name="Read T.D."/>
        </authorList>
    </citation>
    <scope>NUCLEOTIDE SEQUENCE [LARGE SCALE GENOMIC DNA]</scope>
    <source>
        <strain>ATCC 10987 / NRS 248</strain>
    </source>
</reference>
<keyword id="KW-0694">RNA-binding</keyword>
<keyword id="KW-0804">Transcription</keyword>
<keyword id="KW-0889">Transcription antitermination</keyword>
<keyword id="KW-0805">Transcription regulation</keyword>
<dbReference type="EMBL" id="AE017194">
    <property type="protein sequence ID" value="AAS43156.1"/>
    <property type="molecule type" value="Genomic_DNA"/>
</dbReference>
<dbReference type="SMR" id="Q731B1"/>
<dbReference type="KEGG" id="bca:BCE_4255"/>
<dbReference type="HOGENOM" id="CLU_087843_3_3_9"/>
<dbReference type="Proteomes" id="UP000002527">
    <property type="component" value="Chromosome"/>
</dbReference>
<dbReference type="GO" id="GO:0005829">
    <property type="term" value="C:cytosol"/>
    <property type="evidence" value="ECO:0007669"/>
    <property type="project" value="TreeGrafter"/>
</dbReference>
<dbReference type="GO" id="GO:0003723">
    <property type="term" value="F:RNA binding"/>
    <property type="evidence" value="ECO:0007669"/>
    <property type="project" value="UniProtKB-UniRule"/>
</dbReference>
<dbReference type="GO" id="GO:0006353">
    <property type="term" value="P:DNA-templated transcription termination"/>
    <property type="evidence" value="ECO:0007669"/>
    <property type="project" value="UniProtKB-UniRule"/>
</dbReference>
<dbReference type="GO" id="GO:0031564">
    <property type="term" value="P:transcription antitermination"/>
    <property type="evidence" value="ECO:0007669"/>
    <property type="project" value="UniProtKB-KW"/>
</dbReference>
<dbReference type="CDD" id="cd00619">
    <property type="entry name" value="Terminator_NusB"/>
    <property type="match status" value="1"/>
</dbReference>
<dbReference type="FunFam" id="1.10.940.10:FF:000003">
    <property type="entry name" value="Transcription antitermination factor NusB"/>
    <property type="match status" value="1"/>
</dbReference>
<dbReference type="Gene3D" id="1.10.940.10">
    <property type="entry name" value="NusB-like"/>
    <property type="match status" value="1"/>
</dbReference>
<dbReference type="HAMAP" id="MF_00073">
    <property type="entry name" value="NusB"/>
    <property type="match status" value="1"/>
</dbReference>
<dbReference type="InterPro" id="IPR035926">
    <property type="entry name" value="NusB-like_sf"/>
</dbReference>
<dbReference type="InterPro" id="IPR011605">
    <property type="entry name" value="NusB_fam"/>
</dbReference>
<dbReference type="InterPro" id="IPR006027">
    <property type="entry name" value="NusB_RsmB_TIM44"/>
</dbReference>
<dbReference type="NCBIfam" id="TIGR01951">
    <property type="entry name" value="nusB"/>
    <property type="match status" value="1"/>
</dbReference>
<dbReference type="NCBIfam" id="NF001223">
    <property type="entry name" value="PRK00202.1-1"/>
    <property type="match status" value="1"/>
</dbReference>
<dbReference type="PANTHER" id="PTHR11078:SF3">
    <property type="entry name" value="ANTITERMINATION NUSB DOMAIN-CONTAINING PROTEIN"/>
    <property type="match status" value="1"/>
</dbReference>
<dbReference type="PANTHER" id="PTHR11078">
    <property type="entry name" value="N UTILIZATION SUBSTANCE PROTEIN B-RELATED"/>
    <property type="match status" value="1"/>
</dbReference>
<dbReference type="Pfam" id="PF01029">
    <property type="entry name" value="NusB"/>
    <property type="match status" value="1"/>
</dbReference>
<dbReference type="SUPFAM" id="SSF48013">
    <property type="entry name" value="NusB-like"/>
    <property type="match status" value="1"/>
</dbReference>
<organism>
    <name type="scientific">Bacillus cereus (strain ATCC 10987 / NRS 248)</name>
    <dbReference type="NCBI Taxonomy" id="222523"/>
    <lineage>
        <taxon>Bacteria</taxon>
        <taxon>Bacillati</taxon>
        <taxon>Bacillota</taxon>
        <taxon>Bacilli</taxon>
        <taxon>Bacillales</taxon>
        <taxon>Bacillaceae</taxon>
        <taxon>Bacillus</taxon>
        <taxon>Bacillus cereus group</taxon>
    </lineage>
</organism>